<accession>A6TLJ0</accession>
<reference key="1">
    <citation type="journal article" date="2016" name="Genome Announc.">
        <title>Complete genome sequence of Alkaliphilus metalliredigens strain QYMF, an alkaliphilic and metal-reducing bacterium isolated from borax-contaminated leachate ponds.</title>
        <authorList>
            <person name="Hwang C."/>
            <person name="Copeland A."/>
            <person name="Lucas S."/>
            <person name="Lapidus A."/>
            <person name="Barry K."/>
            <person name="Detter J.C."/>
            <person name="Glavina Del Rio T."/>
            <person name="Hammon N."/>
            <person name="Israni S."/>
            <person name="Dalin E."/>
            <person name="Tice H."/>
            <person name="Pitluck S."/>
            <person name="Chertkov O."/>
            <person name="Brettin T."/>
            <person name="Bruce D."/>
            <person name="Han C."/>
            <person name="Schmutz J."/>
            <person name="Larimer F."/>
            <person name="Land M.L."/>
            <person name="Hauser L."/>
            <person name="Kyrpides N."/>
            <person name="Mikhailova N."/>
            <person name="Ye Q."/>
            <person name="Zhou J."/>
            <person name="Richardson P."/>
            <person name="Fields M.W."/>
        </authorList>
    </citation>
    <scope>NUCLEOTIDE SEQUENCE [LARGE SCALE GENOMIC DNA]</scope>
    <source>
        <strain>QYMF</strain>
    </source>
</reference>
<protein>
    <recommendedName>
        <fullName evidence="1">Co-chaperonin GroES</fullName>
    </recommendedName>
    <alternativeName>
        <fullName evidence="1">10 kDa chaperonin</fullName>
    </alternativeName>
    <alternativeName>
        <fullName evidence="1">Chaperonin-10</fullName>
        <shortName evidence="1">Cpn10</shortName>
    </alternativeName>
</protein>
<proteinExistence type="inferred from homology"/>
<name>CH10_ALKMQ</name>
<dbReference type="EMBL" id="CP000724">
    <property type="protein sequence ID" value="ABR47058.1"/>
    <property type="molecule type" value="Genomic_DNA"/>
</dbReference>
<dbReference type="RefSeq" id="WP_012062101.1">
    <property type="nucleotide sequence ID" value="NC_009633.1"/>
</dbReference>
<dbReference type="SMR" id="A6TLJ0"/>
<dbReference type="STRING" id="293826.Amet_0833"/>
<dbReference type="KEGG" id="amt:Amet_0833"/>
<dbReference type="eggNOG" id="COG0234">
    <property type="taxonomic scope" value="Bacteria"/>
</dbReference>
<dbReference type="HOGENOM" id="CLU_132825_2_0_9"/>
<dbReference type="OrthoDB" id="9806791at2"/>
<dbReference type="Proteomes" id="UP000001572">
    <property type="component" value="Chromosome"/>
</dbReference>
<dbReference type="GO" id="GO:0005737">
    <property type="term" value="C:cytoplasm"/>
    <property type="evidence" value="ECO:0007669"/>
    <property type="project" value="UniProtKB-SubCell"/>
</dbReference>
<dbReference type="GO" id="GO:0005524">
    <property type="term" value="F:ATP binding"/>
    <property type="evidence" value="ECO:0007669"/>
    <property type="project" value="InterPro"/>
</dbReference>
<dbReference type="GO" id="GO:0046872">
    <property type="term" value="F:metal ion binding"/>
    <property type="evidence" value="ECO:0007669"/>
    <property type="project" value="TreeGrafter"/>
</dbReference>
<dbReference type="GO" id="GO:0044183">
    <property type="term" value="F:protein folding chaperone"/>
    <property type="evidence" value="ECO:0007669"/>
    <property type="project" value="InterPro"/>
</dbReference>
<dbReference type="GO" id="GO:0051087">
    <property type="term" value="F:protein-folding chaperone binding"/>
    <property type="evidence" value="ECO:0007669"/>
    <property type="project" value="TreeGrafter"/>
</dbReference>
<dbReference type="GO" id="GO:0051082">
    <property type="term" value="F:unfolded protein binding"/>
    <property type="evidence" value="ECO:0007669"/>
    <property type="project" value="TreeGrafter"/>
</dbReference>
<dbReference type="GO" id="GO:0051085">
    <property type="term" value="P:chaperone cofactor-dependent protein refolding"/>
    <property type="evidence" value="ECO:0007669"/>
    <property type="project" value="TreeGrafter"/>
</dbReference>
<dbReference type="CDD" id="cd00320">
    <property type="entry name" value="cpn10"/>
    <property type="match status" value="1"/>
</dbReference>
<dbReference type="FunFam" id="2.30.33.40:FF:000001">
    <property type="entry name" value="10 kDa chaperonin"/>
    <property type="match status" value="1"/>
</dbReference>
<dbReference type="Gene3D" id="2.30.33.40">
    <property type="entry name" value="GroES chaperonin"/>
    <property type="match status" value="1"/>
</dbReference>
<dbReference type="HAMAP" id="MF_00580">
    <property type="entry name" value="CH10"/>
    <property type="match status" value="1"/>
</dbReference>
<dbReference type="InterPro" id="IPR020818">
    <property type="entry name" value="Chaperonin_GroES"/>
</dbReference>
<dbReference type="InterPro" id="IPR037124">
    <property type="entry name" value="Chaperonin_GroES_sf"/>
</dbReference>
<dbReference type="InterPro" id="IPR018369">
    <property type="entry name" value="Chaprnonin_Cpn10_CS"/>
</dbReference>
<dbReference type="InterPro" id="IPR011032">
    <property type="entry name" value="GroES-like_sf"/>
</dbReference>
<dbReference type="NCBIfam" id="NF001531">
    <property type="entry name" value="PRK00364.2-2"/>
    <property type="match status" value="1"/>
</dbReference>
<dbReference type="NCBIfam" id="NF001533">
    <property type="entry name" value="PRK00364.2-4"/>
    <property type="match status" value="1"/>
</dbReference>
<dbReference type="NCBIfam" id="NF001534">
    <property type="entry name" value="PRK00364.2-5"/>
    <property type="match status" value="1"/>
</dbReference>
<dbReference type="PANTHER" id="PTHR10772">
    <property type="entry name" value="10 KDA HEAT SHOCK PROTEIN"/>
    <property type="match status" value="1"/>
</dbReference>
<dbReference type="PANTHER" id="PTHR10772:SF58">
    <property type="entry name" value="CO-CHAPERONIN GROES"/>
    <property type="match status" value="1"/>
</dbReference>
<dbReference type="Pfam" id="PF00166">
    <property type="entry name" value="Cpn10"/>
    <property type="match status" value="1"/>
</dbReference>
<dbReference type="PRINTS" id="PR00297">
    <property type="entry name" value="CHAPERONIN10"/>
</dbReference>
<dbReference type="SMART" id="SM00883">
    <property type="entry name" value="Cpn10"/>
    <property type="match status" value="1"/>
</dbReference>
<dbReference type="SUPFAM" id="SSF50129">
    <property type="entry name" value="GroES-like"/>
    <property type="match status" value="1"/>
</dbReference>
<dbReference type="PROSITE" id="PS00681">
    <property type="entry name" value="CHAPERONINS_CPN10"/>
    <property type="match status" value="1"/>
</dbReference>
<sequence length="94" mass="10110">MNIKPLGDKVVIKKVEAEDKTKSGIVLPGSAKEQPQMAEVVAVGPGGVVEGKEIIMELKVGDKVIFSKYAGTEVKLDGEEYTILRQNDILAVVE</sequence>
<keyword id="KW-0143">Chaperone</keyword>
<keyword id="KW-0963">Cytoplasm</keyword>
<keyword id="KW-1185">Reference proteome</keyword>
<organism>
    <name type="scientific">Alkaliphilus metalliredigens (strain QYMF)</name>
    <dbReference type="NCBI Taxonomy" id="293826"/>
    <lineage>
        <taxon>Bacteria</taxon>
        <taxon>Bacillati</taxon>
        <taxon>Bacillota</taxon>
        <taxon>Clostridia</taxon>
        <taxon>Peptostreptococcales</taxon>
        <taxon>Natronincolaceae</taxon>
        <taxon>Alkaliphilus</taxon>
    </lineage>
</organism>
<evidence type="ECO:0000255" key="1">
    <source>
        <dbReference type="HAMAP-Rule" id="MF_00580"/>
    </source>
</evidence>
<gene>
    <name evidence="1" type="primary">groES</name>
    <name evidence="1" type="synonym">groS</name>
    <name type="ordered locus">Amet_0833</name>
</gene>
<feature type="chain" id="PRO_1000061184" description="Co-chaperonin GroES">
    <location>
        <begin position="1"/>
        <end position="94"/>
    </location>
</feature>
<comment type="function">
    <text evidence="1">Together with the chaperonin GroEL, plays an essential role in assisting protein folding. The GroEL-GroES system forms a nano-cage that allows encapsulation of the non-native substrate proteins and provides a physical environment optimized to promote and accelerate protein folding. GroES binds to the apical surface of the GroEL ring, thereby capping the opening of the GroEL channel.</text>
</comment>
<comment type="subunit">
    <text evidence="1">Heptamer of 7 subunits arranged in a ring. Interacts with the chaperonin GroEL.</text>
</comment>
<comment type="subcellular location">
    <subcellularLocation>
        <location evidence="1">Cytoplasm</location>
    </subcellularLocation>
</comment>
<comment type="similarity">
    <text evidence="1">Belongs to the GroES chaperonin family.</text>
</comment>